<evidence type="ECO:0000250" key="1">
    <source>
        <dbReference type="UniProtKB" id="P9WQ43"/>
    </source>
</evidence>
<evidence type="ECO:0000305" key="2"/>
<proteinExistence type="inferred from homology"/>
<dbReference type="EC" id="6.2.1.59" evidence="1"/>
<dbReference type="EMBL" id="AE000516">
    <property type="protein sequence ID" value="AAK47327.1"/>
    <property type="molecule type" value="Genomic_DNA"/>
</dbReference>
<dbReference type="PIR" id="B70749">
    <property type="entry name" value="B70749"/>
</dbReference>
<dbReference type="RefSeq" id="WP_003900597.1">
    <property type="nucleotide sequence ID" value="NZ_KK341227.1"/>
</dbReference>
<dbReference type="SMR" id="P9WQ42"/>
<dbReference type="KEGG" id="mtc:MT2999"/>
<dbReference type="PATRIC" id="fig|83331.31.peg.3240"/>
<dbReference type="HOGENOM" id="CLU_000022_23_7_11"/>
<dbReference type="UniPathway" id="UPA00094"/>
<dbReference type="Proteomes" id="UP000001020">
    <property type="component" value="Chromosome"/>
</dbReference>
<dbReference type="GO" id="GO:0005886">
    <property type="term" value="C:plasma membrane"/>
    <property type="evidence" value="ECO:0007669"/>
    <property type="project" value="TreeGrafter"/>
</dbReference>
<dbReference type="GO" id="GO:0070566">
    <property type="term" value="F:adenylyltransferase activity"/>
    <property type="evidence" value="ECO:0007669"/>
    <property type="project" value="TreeGrafter"/>
</dbReference>
<dbReference type="GO" id="GO:0005524">
    <property type="term" value="F:ATP binding"/>
    <property type="evidence" value="ECO:0007669"/>
    <property type="project" value="UniProtKB-KW"/>
</dbReference>
<dbReference type="GO" id="GO:0016874">
    <property type="term" value="F:ligase activity"/>
    <property type="evidence" value="ECO:0007669"/>
    <property type="project" value="UniProtKB-KW"/>
</dbReference>
<dbReference type="GO" id="GO:0071766">
    <property type="term" value="P:Actinobacterium-type cell wall biogenesis"/>
    <property type="evidence" value="ECO:0007669"/>
    <property type="project" value="UniProtKB-ARBA"/>
</dbReference>
<dbReference type="GO" id="GO:0006633">
    <property type="term" value="P:fatty acid biosynthetic process"/>
    <property type="evidence" value="ECO:0007669"/>
    <property type="project" value="UniProtKB-UniPathway"/>
</dbReference>
<dbReference type="CDD" id="cd05931">
    <property type="entry name" value="FAAL"/>
    <property type="match status" value="1"/>
</dbReference>
<dbReference type="FunFam" id="3.30.300.30:FF:000016">
    <property type="entry name" value="Fatty-acid-CoA ligase FadD26"/>
    <property type="match status" value="1"/>
</dbReference>
<dbReference type="FunFam" id="3.40.50.12780:FF:000013">
    <property type="entry name" value="Long-chain-fatty-acid--AMP ligase FadD32"/>
    <property type="match status" value="1"/>
</dbReference>
<dbReference type="Gene3D" id="3.30.300.30">
    <property type="match status" value="1"/>
</dbReference>
<dbReference type="Gene3D" id="3.40.50.12780">
    <property type="entry name" value="N-terminal domain of ligase-like"/>
    <property type="match status" value="1"/>
</dbReference>
<dbReference type="InterPro" id="IPR025110">
    <property type="entry name" value="AMP-bd_C"/>
</dbReference>
<dbReference type="InterPro" id="IPR045851">
    <property type="entry name" value="AMP-bd_C_sf"/>
</dbReference>
<dbReference type="InterPro" id="IPR000873">
    <property type="entry name" value="AMP-dep_synth/lig_dom"/>
</dbReference>
<dbReference type="InterPro" id="IPR042099">
    <property type="entry name" value="ANL_N_sf"/>
</dbReference>
<dbReference type="InterPro" id="IPR040097">
    <property type="entry name" value="FAAL/FAAC"/>
</dbReference>
<dbReference type="NCBIfam" id="NF004509">
    <property type="entry name" value="PRK05850.1"/>
    <property type="match status" value="1"/>
</dbReference>
<dbReference type="PANTHER" id="PTHR22754:SF32">
    <property type="entry name" value="DISCO-INTERACTING PROTEIN 2"/>
    <property type="match status" value="1"/>
</dbReference>
<dbReference type="PANTHER" id="PTHR22754">
    <property type="entry name" value="DISCO-INTERACTING PROTEIN 2 DIP2 -RELATED"/>
    <property type="match status" value="1"/>
</dbReference>
<dbReference type="Pfam" id="PF00501">
    <property type="entry name" value="AMP-binding"/>
    <property type="match status" value="1"/>
</dbReference>
<dbReference type="Pfam" id="PF23024">
    <property type="entry name" value="AMP-dom_DIP2-like"/>
    <property type="match status" value="1"/>
</dbReference>
<dbReference type="SUPFAM" id="SSF56801">
    <property type="entry name" value="Acetyl-CoA synthetase-like"/>
    <property type="match status" value="1"/>
</dbReference>
<feature type="chain" id="PRO_0000426841" description="Long-chain-fatty-acid--AMP ligase FadD26">
    <location>
        <begin position="1"/>
        <end position="583"/>
    </location>
</feature>
<accession>P9WQ42</accession>
<accession>L0TDT5</accession>
<accession>Q10976</accession>
<protein>
    <recommendedName>
        <fullName>Long-chain-fatty-acid--AMP ligase FadD26</fullName>
        <shortName>FAAL</shortName>
        <ecNumber evidence="1">6.2.1.59</ecNumber>
    </recommendedName>
    <alternativeName>
        <fullName>Acyl-AMP synthetase</fullName>
    </alternativeName>
</protein>
<name>FAA26_MYCTO</name>
<gene>
    <name type="primary">fadD26</name>
    <name type="ordered locus">MT2999</name>
</gene>
<keyword id="KW-0067">ATP-binding</keyword>
<keyword id="KW-0276">Fatty acid metabolism</keyword>
<keyword id="KW-0436">Ligase</keyword>
<keyword id="KW-0443">Lipid metabolism</keyword>
<keyword id="KW-0547">Nucleotide-binding</keyword>
<keyword id="KW-1185">Reference proteome</keyword>
<organism>
    <name type="scientific">Mycobacterium tuberculosis (strain CDC 1551 / Oshkosh)</name>
    <dbReference type="NCBI Taxonomy" id="83331"/>
    <lineage>
        <taxon>Bacteria</taxon>
        <taxon>Bacillati</taxon>
        <taxon>Actinomycetota</taxon>
        <taxon>Actinomycetes</taxon>
        <taxon>Mycobacteriales</taxon>
        <taxon>Mycobacteriaceae</taxon>
        <taxon>Mycobacterium</taxon>
        <taxon>Mycobacterium tuberculosis complex</taxon>
    </lineage>
</organism>
<reference key="1">
    <citation type="journal article" date="2002" name="J. Bacteriol.">
        <title>Whole-genome comparison of Mycobacterium tuberculosis clinical and laboratory strains.</title>
        <authorList>
            <person name="Fleischmann R.D."/>
            <person name="Alland D."/>
            <person name="Eisen J.A."/>
            <person name="Carpenter L."/>
            <person name="White O."/>
            <person name="Peterson J.D."/>
            <person name="DeBoy R.T."/>
            <person name="Dodson R.J."/>
            <person name="Gwinn M.L."/>
            <person name="Haft D.H."/>
            <person name="Hickey E.K."/>
            <person name="Kolonay J.F."/>
            <person name="Nelson W.C."/>
            <person name="Umayam L.A."/>
            <person name="Ermolaeva M.D."/>
            <person name="Salzberg S.L."/>
            <person name="Delcher A."/>
            <person name="Utterback T.R."/>
            <person name="Weidman J.F."/>
            <person name="Khouri H.M."/>
            <person name="Gill J."/>
            <person name="Mikula A."/>
            <person name="Bishai W."/>
            <person name="Jacobs W.R. Jr."/>
            <person name="Venter J.C."/>
            <person name="Fraser C.M."/>
        </authorList>
    </citation>
    <scope>NUCLEOTIDE SEQUENCE [LARGE SCALE GENOMIC DNA]</scope>
    <source>
        <strain>CDC 1551 / Oshkosh</strain>
    </source>
</reference>
<sequence length="583" mass="63044">MPVTDRSVPSLLQERADQQPDSTAYTYIDYGSDPKGFADSLTWSQVYSRACIIAEELKLCGLPGDRVAVLAPQGLEYVLAFLGALQAGFIAVPLSTPQYGIHDDRVSAVLQDSKPVAILTTSSVVGDVTKYAASHDGQPAPVVVEVDLLDLDSPRQMPAFSRQHTGAAYLQYTSGSTRTPAGVIVSHTNVIANVTQSMYGYFGDPAKIPTGTVVSWLPLYHDMGLILGICAPLVARRRAMLMSPMSFLRRPARWMQLLATSGRCFSAAPNFAFELAVRRTSDQDMAGLDLRDVVGIVSGSERIHVATVRRFIERFAPYNLSPTAIRPSYGLAEATLYVAAPEAGAAPKTVRFDYEQLTAGQARPCGTDGSVGTELISYGSPDPSSVRIVNPETMVENPPGVVGEIWVHGDHVTMGYWQKPKQTAQVFDAKLVDPAPAAPEGPWLRTGDLGVISDGELFIMGRIKDLLIVDGRNHYPDDIEATIQEITGGRAAAIAVPDDITEQLVAIIEFKRRGSTAEEVMLKLRSVKREVTSAISKSHSLRVADLVLVSPGSIPITTSGKIRRSACVERYRSDGFKRLDVAV</sequence>
<comment type="function">
    <text evidence="1">Catalyzes the activation of long-chain fatty acids as acyl-adenylates (acyl-AMP), which are then transferred to the multifunctional polyketide synthase PpsA for further chain extension. Catalyzes the adenylation of the long-chain fatty acids eicosanoate (C20) or docosanoate (C22), and potentially the very-long-chain fatty acid lignocerate (C24). Involved in the biosynthesis of phthiocerol dimycocerosate (DIM A) and phthiodiolone dimycocerosate (DIM B).</text>
</comment>
<comment type="catalytic activity">
    <reaction evidence="1">
        <text>holo-[(phenol)carboxyphthiodiolenone synthase] + a long-chain fatty acid + ATP = a long-chain fatty acyl-[(phenol)carboxyphthiodiolenone synthase] + AMP + diphosphate</text>
        <dbReference type="Rhea" id="RHEA:64660"/>
        <dbReference type="Rhea" id="RHEA-COMP:14271"/>
        <dbReference type="Rhea" id="RHEA-COMP:16648"/>
        <dbReference type="ChEBI" id="CHEBI:30616"/>
        <dbReference type="ChEBI" id="CHEBI:33019"/>
        <dbReference type="ChEBI" id="CHEBI:57560"/>
        <dbReference type="ChEBI" id="CHEBI:64479"/>
        <dbReference type="ChEBI" id="CHEBI:133243"/>
        <dbReference type="ChEBI" id="CHEBI:456215"/>
        <dbReference type="EC" id="6.2.1.59"/>
    </reaction>
</comment>
<comment type="catalytic activity">
    <reaction evidence="1">
        <text>eicosanoate + holo-[(phenol)carboxyphthiodiolenone synthase] + ATP = icosanoyl-[(phenol)carboxyphthiodiolenone synthase] + AMP + diphosphate</text>
        <dbReference type="Rhea" id="RHEA:59156"/>
        <dbReference type="Rhea" id="RHEA-COMP:14271"/>
        <dbReference type="Rhea" id="RHEA-COMP:14985"/>
        <dbReference type="ChEBI" id="CHEBI:30616"/>
        <dbReference type="ChEBI" id="CHEBI:32360"/>
        <dbReference type="ChEBI" id="CHEBI:33019"/>
        <dbReference type="ChEBI" id="CHEBI:64479"/>
        <dbReference type="ChEBI" id="CHEBI:87848"/>
        <dbReference type="ChEBI" id="CHEBI:456215"/>
        <dbReference type="EC" id="6.2.1.59"/>
    </reaction>
</comment>
<comment type="catalytic activity">
    <reaction evidence="1">
        <text>holo-[(phenol)carboxyphthiodiolenone synthase] + docosanoate + ATP = docosanoyl-[(phenol)carboxyphthiodiolenone synthase] + AMP + diphosphate</text>
        <dbReference type="Rhea" id="RHEA:59160"/>
        <dbReference type="Rhea" id="RHEA-COMP:14271"/>
        <dbReference type="Rhea" id="RHEA-COMP:14987"/>
        <dbReference type="ChEBI" id="CHEBI:23858"/>
        <dbReference type="ChEBI" id="CHEBI:30616"/>
        <dbReference type="ChEBI" id="CHEBI:33019"/>
        <dbReference type="ChEBI" id="CHEBI:64479"/>
        <dbReference type="ChEBI" id="CHEBI:142238"/>
        <dbReference type="ChEBI" id="CHEBI:456215"/>
        <dbReference type="EC" id="6.2.1.59"/>
    </reaction>
</comment>
<comment type="pathway">
    <text evidence="1">Lipid metabolism; fatty acid biosynthesis.</text>
</comment>
<comment type="similarity">
    <text evidence="2">Belongs to the ATP-dependent AMP-binding enzyme family.</text>
</comment>